<keyword id="KW-0017">Alkaloid metabolism</keyword>
<keyword id="KW-0349">Heme</keyword>
<keyword id="KW-0408">Iron</keyword>
<keyword id="KW-1017">Isopeptide bond</keyword>
<keyword id="KW-0472">Membrane</keyword>
<keyword id="KW-0479">Metal-binding</keyword>
<keyword id="KW-0503">Monooxygenase</keyword>
<keyword id="KW-0560">Oxidoreductase</keyword>
<keyword id="KW-0812">Transmembrane</keyword>
<keyword id="KW-1133">Transmembrane helix</keyword>
<keyword id="KW-0832">Ubl conjugation</keyword>
<proteinExistence type="evidence at protein level"/>
<feature type="chain" id="PRO_0000455782" description="Nicotine N-demethylase CYP82E4">
    <location>
        <begin position="1"/>
        <end position="517"/>
    </location>
</feature>
<feature type="transmembrane region" description="Helical" evidence="3">
    <location>
        <begin position="2"/>
        <end position="22"/>
    </location>
</feature>
<feature type="binding site" description="axial binding residue" evidence="1">
    <location>
        <position position="457"/>
    </location>
    <ligand>
        <name>heme</name>
        <dbReference type="ChEBI" id="CHEBI:30413"/>
    </ligand>
    <ligandPart>
        <name>Fe</name>
        <dbReference type="ChEBI" id="CHEBI:18248"/>
    </ligandPart>
</feature>
<feature type="cross-link" description="Glycyl lysine isopeptide (Lys-Gly) (interchain with G-Cter in ubiquitin)" evidence="2">
    <location>
        <position position="254"/>
    </location>
</feature>
<reference key="1">
    <citation type="journal article" date="2007" name="J. Biol. Chem.">
        <title>Functional analysis of nicotine demethylase genes reveals insights into the evolution of modern tobacco.</title>
        <authorList>
            <person name="Gavilano L.B."/>
            <person name="Coleman N.P."/>
            <person name="Bowen S.W."/>
            <person name="Siminszky B."/>
        </authorList>
    </citation>
    <scope>NUCLEOTIDE SEQUENCE [GENOMIC DNA]</scope>
    <scope>FUNCTION</scope>
    <scope>CATALYTIC ACTIVITY</scope>
    <scope>PATHWAY</scope>
    <scope>BIOPHYSICOCHEMICAL PROPERTIES</scope>
    <scope>TISSUE SPECIFICITY</scope>
    <scope>DEVELOPMENTAL STAGE</scope>
</reference>
<organism>
    <name type="scientific">Nicotiana tomentosiformis</name>
    <name type="common">Tobacco</name>
    <dbReference type="NCBI Taxonomy" id="4098"/>
    <lineage>
        <taxon>Eukaryota</taxon>
        <taxon>Viridiplantae</taxon>
        <taxon>Streptophyta</taxon>
        <taxon>Embryophyta</taxon>
        <taxon>Tracheophyta</taxon>
        <taxon>Spermatophyta</taxon>
        <taxon>Magnoliopsida</taxon>
        <taxon>eudicotyledons</taxon>
        <taxon>Gunneridae</taxon>
        <taxon>Pentapetalae</taxon>
        <taxon>asterids</taxon>
        <taxon>lamiids</taxon>
        <taxon>Solanales</taxon>
        <taxon>Solanaceae</taxon>
        <taxon>Nicotianoideae</taxon>
        <taxon>Nicotianeae</taxon>
        <taxon>Nicotiana</taxon>
    </lineage>
</organism>
<gene>
    <name evidence="5" type="primary">CYP82E4</name>
</gene>
<dbReference type="EC" id="1.14.14.-" evidence="4"/>
<dbReference type="EMBL" id="EF042307">
    <property type="protein sequence ID" value="ABM46920.1"/>
    <property type="molecule type" value="Genomic_DNA"/>
</dbReference>
<dbReference type="SMR" id="A1YJE3"/>
<dbReference type="GeneID" id="104103347"/>
<dbReference type="KEGG" id="nto:104103347"/>
<dbReference type="OrthoDB" id="1055148at2759"/>
<dbReference type="BRENDA" id="1.14.14.B11">
    <property type="organism ID" value="3648"/>
</dbReference>
<dbReference type="UniPathway" id="UPA00107"/>
<dbReference type="GO" id="GO:0016020">
    <property type="term" value="C:membrane"/>
    <property type="evidence" value="ECO:0007669"/>
    <property type="project" value="UniProtKB-SubCell"/>
</dbReference>
<dbReference type="GO" id="GO:0020037">
    <property type="term" value="F:heme binding"/>
    <property type="evidence" value="ECO:0007669"/>
    <property type="project" value="InterPro"/>
</dbReference>
<dbReference type="GO" id="GO:0005506">
    <property type="term" value="F:iron ion binding"/>
    <property type="evidence" value="ECO:0007669"/>
    <property type="project" value="InterPro"/>
</dbReference>
<dbReference type="GO" id="GO:0004497">
    <property type="term" value="F:monooxygenase activity"/>
    <property type="evidence" value="ECO:0007669"/>
    <property type="project" value="UniProtKB-KW"/>
</dbReference>
<dbReference type="GO" id="GO:0016705">
    <property type="term" value="F:oxidoreductase activity, acting on paired donors, with incorporation or reduction of molecular oxygen"/>
    <property type="evidence" value="ECO:0007669"/>
    <property type="project" value="InterPro"/>
</dbReference>
<dbReference type="GO" id="GO:0009820">
    <property type="term" value="P:alkaloid metabolic process"/>
    <property type="evidence" value="ECO:0007669"/>
    <property type="project" value="UniProtKB-KW"/>
</dbReference>
<dbReference type="GO" id="GO:0042179">
    <property type="term" value="P:nicotine biosynthetic process"/>
    <property type="evidence" value="ECO:0007669"/>
    <property type="project" value="UniProtKB-UniPathway"/>
</dbReference>
<dbReference type="FunFam" id="1.10.630.10:FF:000026">
    <property type="entry name" value="Cytochrome P450 82C4"/>
    <property type="match status" value="1"/>
</dbReference>
<dbReference type="Gene3D" id="1.10.630.10">
    <property type="entry name" value="Cytochrome P450"/>
    <property type="match status" value="1"/>
</dbReference>
<dbReference type="InterPro" id="IPR001128">
    <property type="entry name" value="Cyt_P450"/>
</dbReference>
<dbReference type="InterPro" id="IPR017972">
    <property type="entry name" value="Cyt_P450_CS"/>
</dbReference>
<dbReference type="InterPro" id="IPR002401">
    <property type="entry name" value="Cyt_P450_E_grp-I"/>
</dbReference>
<dbReference type="InterPro" id="IPR036396">
    <property type="entry name" value="Cyt_P450_sf"/>
</dbReference>
<dbReference type="InterPro" id="IPR050651">
    <property type="entry name" value="Plant_Cytochrome_P450_Monoox"/>
</dbReference>
<dbReference type="PANTHER" id="PTHR47947">
    <property type="entry name" value="CYTOCHROME P450 82C3-RELATED"/>
    <property type="match status" value="1"/>
</dbReference>
<dbReference type="PANTHER" id="PTHR47947:SF1">
    <property type="entry name" value="CYTOCHROME P450 82E3"/>
    <property type="match status" value="1"/>
</dbReference>
<dbReference type="Pfam" id="PF00067">
    <property type="entry name" value="p450"/>
    <property type="match status" value="1"/>
</dbReference>
<dbReference type="PRINTS" id="PR00463">
    <property type="entry name" value="EP450I"/>
</dbReference>
<dbReference type="PRINTS" id="PR00385">
    <property type="entry name" value="P450"/>
</dbReference>
<dbReference type="SUPFAM" id="SSF48264">
    <property type="entry name" value="Cytochrome P450"/>
    <property type="match status" value="1"/>
</dbReference>
<dbReference type="PROSITE" id="PS00086">
    <property type="entry name" value="CYTOCHROME_P450"/>
    <property type="match status" value="1"/>
</dbReference>
<comment type="function">
    <text evidence="4">Involved in the biosynthesis of pyridine alkaloid natural products, leading mainly to the production of anabasine, anatabine, nicotine and nornicotine, effective deterrents against herbivores with antiparasitic and pesticide properties (neurotoxins); nornicotine serves as the precursor in the synthesis of the carcinogen compound N'-nitrosonornicotine (NNN) (PubMed:17102129). Catalyzes the demethylation of nicotine to form nornicotine (PubMed:17102129).</text>
</comment>
<comment type="catalytic activity">
    <reaction evidence="4">
        <text>(S)-nicotine + reduced [NADPH--hemoprotein reductase] + O2 = (S)-nornicotine + formaldehyde + oxidized [NADPH--hemoprotein reductase] + H2O + H(+)</text>
        <dbReference type="Rhea" id="RHEA:70999"/>
        <dbReference type="Rhea" id="RHEA-COMP:11964"/>
        <dbReference type="Rhea" id="RHEA-COMP:11965"/>
        <dbReference type="ChEBI" id="CHEBI:15377"/>
        <dbReference type="ChEBI" id="CHEBI:15378"/>
        <dbReference type="ChEBI" id="CHEBI:15379"/>
        <dbReference type="ChEBI" id="CHEBI:16842"/>
        <dbReference type="ChEBI" id="CHEBI:57618"/>
        <dbReference type="ChEBI" id="CHEBI:58210"/>
        <dbReference type="ChEBI" id="CHEBI:59806"/>
        <dbReference type="ChEBI" id="CHEBI:190184"/>
    </reaction>
    <physiologicalReaction direction="left-to-right" evidence="4">
        <dbReference type="Rhea" id="RHEA:71000"/>
    </physiologicalReaction>
</comment>
<comment type="cofactor">
    <cofactor evidence="1">
        <name>heme</name>
        <dbReference type="ChEBI" id="CHEBI:30413"/>
    </cofactor>
</comment>
<comment type="biophysicochemical properties">
    <kinetics>
        <KM evidence="4">9.1 uM for nicotine</KM>
        <Vmax evidence="4">1.0 nmol/min/mg enzyme with nicotine as substrate</Vmax>
    </kinetics>
</comment>
<comment type="pathway">
    <text evidence="4">Alkaloid biosynthesis; nicotine biosynthesis.</text>
</comment>
<comment type="subcellular location">
    <subcellularLocation>
        <location evidence="3">Membrane</location>
        <topology evidence="3">Single-pass membrane protein</topology>
    </subcellularLocation>
</comment>
<comment type="tissue specificity">
    <text evidence="4">Expressed in leaves.</text>
</comment>
<comment type="developmental stage">
    <text evidence="4">Expressed in green leaves but fades out during senescence.</text>
</comment>
<comment type="similarity">
    <text evidence="6">Belongs to the cytochrome P450 family. CYP82E2 subfamily.</text>
</comment>
<evidence type="ECO:0000250" key="1">
    <source>
        <dbReference type="UniProtKB" id="P04798"/>
    </source>
</evidence>
<evidence type="ECO:0000250" key="2">
    <source>
        <dbReference type="UniProtKB" id="Q9SZU1"/>
    </source>
</evidence>
<evidence type="ECO:0000255" key="3"/>
<evidence type="ECO:0000269" key="4">
    <source>
    </source>
</evidence>
<evidence type="ECO:0000303" key="5">
    <source>
    </source>
</evidence>
<evidence type="ECO:0000305" key="6"/>
<accession>A1YJE3</accession>
<sequence>MLSPIEAIVGLVTFTFLFYFLWTKKSQKPSKPLPPKIPGGWPVIGHLFHFNDDGDDRPLARKLGDLADKYGPVFTFRLGLPLVLVVSSYEAVKDCFSTNDAIFSNRPAFLYGDYLGYNNAMLFLANYGPYWRKNRKLVIQEVLSASRLEKFKHVRFARIQASIKNLYTRIDGNSSTINLTDWLEELNFGLIVKMIAGKNYESGKGDEQVERFKKAFKDFMILSMEFVLWDAFPIPLFKWVDFQGHVKAMKRTFKDIDSVFQNWLEEHINKREKMEVNAEGNEQDFIDVVLSKMSNEYLGEGYSRDTVIKATVFSLVLDAADTVALHINWGMALLINNQKALTKAQEEIDTKVGKDRWVEESDIKDLVYLQAIVKEVLRLYPPGPLLVPHENVEDCVVSGYHIPKGTRLFANVMKLQRDPKLWSDPDTFDPERFIATDIDFRGQYYKYIPFGSGRRSCPGMTYALQVEHLTMAHLIQGFNYRTPNDEPLDMKEGAGITIRKVNPVELIIAPRLAPELY</sequence>
<protein>
    <recommendedName>
        <fullName evidence="5">Nicotine N-demethylase CYP82E4</fullName>
        <shortName evidence="5">NND</shortName>
        <ecNumber evidence="4">1.14.14.-</ecNumber>
    </recommendedName>
    <alternativeName>
        <fullName evidence="5">Cytochrome P450 82E4</fullName>
        <shortName evidence="5">NtomCYP82E4</shortName>
    </alternativeName>
</protein>
<name>C82E4_NICTO</name>